<accession>P67439</accession>
<accession>A0A1R3XZF0</accession>
<accession>Q50617</accession>
<accession>X2BJA0</accession>
<reference key="1">
    <citation type="journal article" date="2003" name="Proc. Natl. Acad. Sci. U.S.A.">
        <title>The complete genome sequence of Mycobacterium bovis.</title>
        <authorList>
            <person name="Garnier T."/>
            <person name="Eiglmeier K."/>
            <person name="Camus J.-C."/>
            <person name="Medina N."/>
            <person name="Mansoor H."/>
            <person name="Pryor M."/>
            <person name="Duthoy S."/>
            <person name="Grondin S."/>
            <person name="Lacroix C."/>
            <person name="Monsempe C."/>
            <person name="Simon S."/>
            <person name="Harris B."/>
            <person name="Atkin R."/>
            <person name="Doggett J."/>
            <person name="Mayes R."/>
            <person name="Keating L."/>
            <person name="Wheeler P.R."/>
            <person name="Parkhill J."/>
            <person name="Barrell B.G."/>
            <person name="Cole S.T."/>
            <person name="Gordon S.V."/>
            <person name="Hewinson R.G."/>
        </authorList>
    </citation>
    <scope>NUCLEOTIDE SEQUENCE [LARGE SCALE GENOMIC DNA]</scope>
    <source>
        <strain>ATCC BAA-935 / AF2122/97</strain>
    </source>
</reference>
<reference key="2">
    <citation type="journal article" date="2017" name="Genome Announc.">
        <title>Updated reference genome sequence and annotation of Mycobacterium bovis AF2122/97.</title>
        <authorList>
            <person name="Malone K.M."/>
            <person name="Farrell D."/>
            <person name="Stuber T.P."/>
            <person name="Schubert O.T."/>
            <person name="Aebersold R."/>
            <person name="Robbe-Austerman S."/>
            <person name="Gordon S.V."/>
        </authorList>
    </citation>
    <scope>NUCLEOTIDE SEQUENCE [LARGE SCALE GENOMIC DNA]</scope>
    <scope>GENOME REANNOTATION</scope>
    <source>
        <strain>ATCC BAA-935 / AF2122/97</strain>
    </source>
</reference>
<name>Y1846_MYCBO</name>
<sequence>MCQTCRVGKRRDAREQIEAKIVELGRRQLLDHGAAGLSLRAIARNLGMVSSAVYRYVSSRDELLTLLLVDAYSDLADTVDRARDDTVADSWSDDVIAIARAVRGWAVTNPARWALLYGSPVPGYHAPPDRTAGVATRVVGAFFDAIAAGIATGDIRLTDDVAPQPMSSDFEKIRQEFGFPGDDRVVTKCFLLWAGVVGAISLEVFGQYGADMLTDPGVVFDAQTRLLVAVLAEH</sequence>
<proteinExistence type="inferred from homology"/>
<evidence type="ECO:0000250" key="1">
    <source>
        <dbReference type="UniProtKB" id="P9WMC9"/>
    </source>
</evidence>
<evidence type="ECO:0000255" key="2">
    <source>
        <dbReference type="PROSITE-ProRule" id="PRU00335"/>
    </source>
</evidence>
<evidence type="ECO:0000305" key="3"/>
<dbReference type="EMBL" id="LT708304">
    <property type="protein sequence ID" value="SIU00450.1"/>
    <property type="molecule type" value="Genomic_DNA"/>
</dbReference>
<dbReference type="RefSeq" id="NP_855498.1">
    <property type="nucleotide sequence ID" value="NC_002945.3"/>
</dbReference>
<dbReference type="SMR" id="P67439"/>
<dbReference type="KEGG" id="mbo:BQ2027_MB1846"/>
<dbReference type="PATRIC" id="fig|233413.5.peg.2027"/>
<dbReference type="Proteomes" id="UP000001419">
    <property type="component" value="Chromosome"/>
</dbReference>
<dbReference type="GO" id="GO:0005737">
    <property type="term" value="C:cytoplasm"/>
    <property type="evidence" value="ECO:0007669"/>
    <property type="project" value="UniProtKB-SubCell"/>
</dbReference>
<dbReference type="GO" id="GO:0003700">
    <property type="term" value="F:DNA-binding transcription factor activity"/>
    <property type="evidence" value="ECO:0007669"/>
    <property type="project" value="TreeGrafter"/>
</dbReference>
<dbReference type="GO" id="GO:0000976">
    <property type="term" value="F:transcription cis-regulatory region binding"/>
    <property type="evidence" value="ECO:0007669"/>
    <property type="project" value="TreeGrafter"/>
</dbReference>
<dbReference type="Gene3D" id="1.10.357.10">
    <property type="entry name" value="Tetracycline Repressor, domain 2"/>
    <property type="match status" value="1"/>
</dbReference>
<dbReference type="InterPro" id="IPR009057">
    <property type="entry name" value="Homeodomain-like_sf"/>
</dbReference>
<dbReference type="InterPro" id="IPR050109">
    <property type="entry name" value="HTH-type_TetR-like_transc_reg"/>
</dbReference>
<dbReference type="InterPro" id="IPR001647">
    <property type="entry name" value="HTH_TetR"/>
</dbReference>
<dbReference type="InterPro" id="IPR025996">
    <property type="entry name" value="MT1864/Rv1816-like_C"/>
</dbReference>
<dbReference type="InterPro" id="IPR036271">
    <property type="entry name" value="Tet_transcr_reg_TetR-rel_C_sf"/>
</dbReference>
<dbReference type="PANTHER" id="PTHR30055">
    <property type="entry name" value="HTH-TYPE TRANSCRIPTIONAL REGULATOR RUTR"/>
    <property type="match status" value="1"/>
</dbReference>
<dbReference type="PANTHER" id="PTHR30055:SF243">
    <property type="entry name" value="HTH-TYPE TRANSCRIPTIONAL REGULATOR RV1816"/>
    <property type="match status" value="1"/>
</dbReference>
<dbReference type="Pfam" id="PF13305">
    <property type="entry name" value="TetR_C_33"/>
    <property type="match status" value="1"/>
</dbReference>
<dbReference type="Pfam" id="PF00440">
    <property type="entry name" value="TetR_N"/>
    <property type="match status" value="1"/>
</dbReference>
<dbReference type="SUPFAM" id="SSF46689">
    <property type="entry name" value="Homeodomain-like"/>
    <property type="match status" value="1"/>
</dbReference>
<dbReference type="SUPFAM" id="SSF48498">
    <property type="entry name" value="Tetracyclin repressor-like, C-terminal domain"/>
    <property type="match status" value="1"/>
</dbReference>
<dbReference type="PROSITE" id="PS50977">
    <property type="entry name" value="HTH_TETR_2"/>
    <property type="match status" value="1"/>
</dbReference>
<comment type="function">
    <text evidence="1">May participate in the regulatory network that controls the expression of MmpL lipid transporters.</text>
</comment>
<comment type="subunit">
    <text evidence="1">Homodimer.</text>
</comment>
<comment type="subcellular location">
    <subcellularLocation>
        <location evidence="3">Cytoplasm</location>
    </subcellularLocation>
</comment>
<comment type="domain">
    <text evidence="1">Contains an N-terminal DNA-binding domain and a C-terminal ligand-binding regulatory domain.</text>
</comment>
<feature type="chain" id="PRO_0000070665" description="HTH-type transcriptional regulator Mb1846">
    <location>
        <begin position="1"/>
        <end position="234"/>
    </location>
</feature>
<feature type="domain" description="HTH tetR-type" evidence="2">
    <location>
        <begin position="15"/>
        <end position="75"/>
    </location>
</feature>
<feature type="DNA-binding region" description="H-T-H motif" evidence="2">
    <location>
        <begin position="38"/>
        <end position="57"/>
    </location>
</feature>
<keyword id="KW-0963">Cytoplasm</keyword>
<keyword id="KW-0238">DNA-binding</keyword>
<keyword id="KW-1185">Reference proteome</keyword>
<keyword id="KW-0804">Transcription</keyword>
<keyword id="KW-0805">Transcription regulation</keyword>
<organism>
    <name type="scientific">Mycobacterium bovis (strain ATCC BAA-935 / AF2122/97)</name>
    <dbReference type="NCBI Taxonomy" id="233413"/>
    <lineage>
        <taxon>Bacteria</taxon>
        <taxon>Bacillati</taxon>
        <taxon>Actinomycetota</taxon>
        <taxon>Actinomycetes</taxon>
        <taxon>Mycobacteriales</taxon>
        <taxon>Mycobacteriaceae</taxon>
        <taxon>Mycobacterium</taxon>
        <taxon>Mycobacterium tuberculosis complex</taxon>
    </lineage>
</organism>
<gene>
    <name type="ordered locus">BQ2027_MB1846</name>
</gene>
<protein>
    <recommendedName>
        <fullName evidence="3">HTH-type transcriptional regulator Mb1846</fullName>
    </recommendedName>
</protein>